<gene>
    <name evidence="1" type="primary">rsmA</name>
    <name evidence="1" type="synonym">ksgA</name>
    <name type="ordered locus">BAA_0050</name>
</gene>
<comment type="function">
    <text evidence="1">Specifically dimethylates two adjacent adenosines (A1518 and A1519) in the loop of a conserved hairpin near the 3'-end of 16S rRNA in the 30S particle. May play a critical role in biogenesis of 30S subunits.</text>
</comment>
<comment type="catalytic activity">
    <reaction evidence="1">
        <text>adenosine(1518)/adenosine(1519) in 16S rRNA + 4 S-adenosyl-L-methionine = N(6)-dimethyladenosine(1518)/N(6)-dimethyladenosine(1519) in 16S rRNA + 4 S-adenosyl-L-homocysteine + 4 H(+)</text>
        <dbReference type="Rhea" id="RHEA:19609"/>
        <dbReference type="Rhea" id="RHEA-COMP:10232"/>
        <dbReference type="Rhea" id="RHEA-COMP:10233"/>
        <dbReference type="ChEBI" id="CHEBI:15378"/>
        <dbReference type="ChEBI" id="CHEBI:57856"/>
        <dbReference type="ChEBI" id="CHEBI:59789"/>
        <dbReference type="ChEBI" id="CHEBI:74411"/>
        <dbReference type="ChEBI" id="CHEBI:74493"/>
        <dbReference type="EC" id="2.1.1.182"/>
    </reaction>
</comment>
<comment type="subcellular location">
    <subcellularLocation>
        <location evidence="1">Cytoplasm</location>
    </subcellularLocation>
</comment>
<comment type="similarity">
    <text evidence="1">Belongs to the class I-like SAM-binding methyltransferase superfamily. rRNA adenine N(6)-methyltransferase family. RsmA subfamily.</text>
</comment>
<organism>
    <name type="scientific">Bacillus anthracis (strain A0248)</name>
    <dbReference type="NCBI Taxonomy" id="592021"/>
    <lineage>
        <taxon>Bacteria</taxon>
        <taxon>Bacillati</taxon>
        <taxon>Bacillota</taxon>
        <taxon>Bacilli</taxon>
        <taxon>Bacillales</taxon>
        <taxon>Bacillaceae</taxon>
        <taxon>Bacillus</taxon>
        <taxon>Bacillus cereus group</taxon>
    </lineage>
</organism>
<sequence length="292" mass="32768">MKDIATPNRTKDIVEKYGFSFKKSLGQNFLIDTNVLNRIVDHAEIGSESGAIEIGPGIGALTEQLAKRAKKVVAFEIDQRLLPILDETLAPYGNVTVINKDVLKADVHEVFSEQFEEGQDVMVVANLPYYITTPILFKLLEEKLPVRGFVVMMQKEVGDRLAAKPGTKEYGSLSIAIQYYTEVETVMTVPRTVFVPQPNVDSAIIRLLKRPKPVVEVTDETFFFEVVRASFAQRRKTLMNNLSNNLNGFPKDKELLDRILTEVGIDPKRRGETLSIEEFATLSNALVLHKLS</sequence>
<name>RSMA_BACAA</name>
<evidence type="ECO:0000255" key="1">
    <source>
        <dbReference type="HAMAP-Rule" id="MF_00607"/>
    </source>
</evidence>
<keyword id="KW-0963">Cytoplasm</keyword>
<keyword id="KW-0489">Methyltransferase</keyword>
<keyword id="KW-0694">RNA-binding</keyword>
<keyword id="KW-0698">rRNA processing</keyword>
<keyword id="KW-0949">S-adenosyl-L-methionine</keyword>
<keyword id="KW-0808">Transferase</keyword>
<feature type="chain" id="PRO_1000147122" description="Ribosomal RNA small subunit methyltransferase A">
    <location>
        <begin position="1"/>
        <end position="292"/>
    </location>
</feature>
<feature type="binding site" evidence="1">
    <location>
        <position position="28"/>
    </location>
    <ligand>
        <name>S-adenosyl-L-methionine</name>
        <dbReference type="ChEBI" id="CHEBI:59789"/>
    </ligand>
</feature>
<feature type="binding site" evidence="1">
    <location>
        <position position="30"/>
    </location>
    <ligand>
        <name>S-adenosyl-L-methionine</name>
        <dbReference type="ChEBI" id="CHEBI:59789"/>
    </ligand>
</feature>
<feature type="binding site" evidence="1">
    <location>
        <position position="55"/>
    </location>
    <ligand>
        <name>S-adenosyl-L-methionine</name>
        <dbReference type="ChEBI" id="CHEBI:59789"/>
    </ligand>
</feature>
<feature type="binding site" evidence="1">
    <location>
        <position position="76"/>
    </location>
    <ligand>
        <name>S-adenosyl-L-methionine</name>
        <dbReference type="ChEBI" id="CHEBI:59789"/>
    </ligand>
</feature>
<feature type="binding site" evidence="1">
    <location>
        <position position="101"/>
    </location>
    <ligand>
        <name>S-adenosyl-L-methionine</name>
        <dbReference type="ChEBI" id="CHEBI:59789"/>
    </ligand>
</feature>
<feature type="binding site" evidence="1">
    <location>
        <position position="126"/>
    </location>
    <ligand>
        <name>S-adenosyl-L-methionine</name>
        <dbReference type="ChEBI" id="CHEBI:59789"/>
    </ligand>
</feature>
<reference key="1">
    <citation type="submission" date="2009-04" db="EMBL/GenBank/DDBJ databases">
        <title>Genome sequence of Bacillus anthracis A0248.</title>
        <authorList>
            <person name="Dodson R.J."/>
            <person name="Munk A.C."/>
            <person name="Bruce D."/>
            <person name="Detter C."/>
            <person name="Tapia R."/>
            <person name="Sutton G."/>
            <person name="Sims D."/>
            <person name="Brettin T."/>
        </authorList>
    </citation>
    <scope>NUCLEOTIDE SEQUENCE [LARGE SCALE GENOMIC DNA]</scope>
    <source>
        <strain>A0248</strain>
    </source>
</reference>
<accession>C3P9I6</accession>
<proteinExistence type="inferred from homology"/>
<protein>
    <recommendedName>
        <fullName evidence="1">Ribosomal RNA small subunit methyltransferase A</fullName>
        <ecNumber evidence="1">2.1.1.182</ecNumber>
    </recommendedName>
    <alternativeName>
        <fullName evidence="1">16S rRNA (adenine(1518)-N(6)/adenine(1519)-N(6))-dimethyltransferase</fullName>
    </alternativeName>
    <alternativeName>
        <fullName evidence="1">16S rRNA dimethyladenosine transferase</fullName>
    </alternativeName>
    <alternativeName>
        <fullName evidence="1">16S rRNA dimethylase</fullName>
    </alternativeName>
    <alternativeName>
        <fullName evidence="1">S-adenosylmethionine-6-N', N'-adenosyl(rRNA) dimethyltransferase</fullName>
    </alternativeName>
</protein>
<dbReference type="EC" id="2.1.1.182" evidence="1"/>
<dbReference type="EMBL" id="CP001598">
    <property type="protein sequence ID" value="ACQ47435.1"/>
    <property type="molecule type" value="Genomic_DNA"/>
</dbReference>
<dbReference type="RefSeq" id="WP_000651552.1">
    <property type="nucleotide sequence ID" value="NC_012659.1"/>
</dbReference>
<dbReference type="SMR" id="C3P9I6"/>
<dbReference type="GeneID" id="75083305"/>
<dbReference type="KEGG" id="bai:BAA_0050"/>
<dbReference type="HOGENOM" id="CLU_041220_0_0_9"/>
<dbReference type="GO" id="GO:0005829">
    <property type="term" value="C:cytosol"/>
    <property type="evidence" value="ECO:0007669"/>
    <property type="project" value="TreeGrafter"/>
</dbReference>
<dbReference type="GO" id="GO:0052908">
    <property type="term" value="F:16S rRNA (adenine(1518)-N(6)/adenine(1519)-N(6))-dimethyltransferase activity"/>
    <property type="evidence" value="ECO:0007669"/>
    <property type="project" value="UniProtKB-EC"/>
</dbReference>
<dbReference type="GO" id="GO:0003723">
    <property type="term" value="F:RNA binding"/>
    <property type="evidence" value="ECO:0007669"/>
    <property type="project" value="UniProtKB-KW"/>
</dbReference>
<dbReference type="CDD" id="cd02440">
    <property type="entry name" value="AdoMet_MTases"/>
    <property type="match status" value="1"/>
</dbReference>
<dbReference type="FunFam" id="1.10.8.100:FF:000002">
    <property type="entry name" value="Ribosomal RNA small subunit methyltransferase A"/>
    <property type="match status" value="1"/>
</dbReference>
<dbReference type="FunFam" id="3.40.50.150:FF:000023">
    <property type="entry name" value="Ribosomal RNA small subunit methyltransferase A"/>
    <property type="match status" value="1"/>
</dbReference>
<dbReference type="Gene3D" id="1.10.8.100">
    <property type="entry name" value="Ribosomal RNA adenine dimethylase-like, domain 2"/>
    <property type="match status" value="1"/>
</dbReference>
<dbReference type="Gene3D" id="3.40.50.150">
    <property type="entry name" value="Vaccinia Virus protein VP39"/>
    <property type="match status" value="1"/>
</dbReference>
<dbReference type="HAMAP" id="MF_00607">
    <property type="entry name" value="16SrRNA_methyltr_A"/>
    <property type="match status" value="1"/>
</dbReference>
<dbReference type="InterPro" id="IPR001737">
    <property type="entry name" value="KsgA/Erm"/>
</dbReference>
<dbReference type="InterPro" id="IPR023165">
    <property type="entry name" value="rRNA_Ade_diMease-like_C"/>
</dbReference>
<dbReference type="InterPro" id="IPR020596">
    <property type="entry name" value="rRNA_Ade_Mease_Trfase_CS"/>
</dbReference>
<dbReference type="InterPro" id="IPR020598">
    <property type="entry name" value="rRNA_Ade_methylase_Trfase_N"/>
</dbReference>
<dbReference type="InterPro" id="IPR011530">
    <property type="entry name" value="rRNA_adenine_dimethylase"/>
</dbReference>
<dbReference type="InterPro" id="IPR029063">
    <property type="entry name" value="SAM-dependent_MTases_sf"/>
</dbReference>
<dbReference type="NCBIfam" id="TIGR00755">
    <property type="entry name" value="ksgA"/>
    <property type="match status" value="1"/>
</dbReference>
<dbReference type="PANTHER" id="PTHR11727">
    <property type="entry name" value="DIMETHYLADENOSINE TRANSFERASE"/>
    <property type="match status" value="1"/>
</dbReference>
<dbReference type="PANTHER" id="PTHR11727:SF7">
    <property type="entry name" value="DIMETHYLADENOSINE TRANSFERASE-RELATED"/>
    <property type="match status" value="1"/>
</dbReference>
<dbReference type="Pfam" id="PF00398">
    <property type="entry name" value="RrnaAD"/>
    <property type="match status" value="1"/>
</dbReference>
<dbReference type="SMART" id="SM00650">
    <property type="entry name" value="rADc"/>
    <property type="match status" value="1"/>
</dbReference>
<dbReference type="SUPFAM" id="SSF53335">
    <property type="entry name" value="S-adenosyl-L-methionine-dependent methyltransferases"/>
    <property type="match status" value="1"/>
</dbReference>
<dbReference type="PROSITE" id="PS01131">
    <property type="entry name" value="RRNA_A_DIMETH"/>
    <property type="match status" value="1"/>
</dbReference>
<dbReference type="PROSITE" id="PS51689">
    <property type="entry name" value="SAM_RNA_A_N6_MT"/>
    <property type="match status" value="1"/>
</dbReference>